<protein>
    <recommendedName>
        <fullName>Beta-defensin 129</fullName>
    </recommendedName>
    <alternativeName>
        <fullName>Defensin, beta 129</fullName>
    </alternativeName>
</protein>
<evidence type="ECO:0000250" key="1"/>
<evidence type="ECO:0000255" key="2"/>
<evidence type="ECO:0000256" key="3">
    <source>
        <dbReference type="SAM" id="MobiDB-lite"/>
    </source>
</evidence>
<evidence type="ECO:0000305" key="4"/>
<gene>
    <name type="primary">DEFB129</name>
</gene>
<keyword id="KW-0044">Antibiotic</keyword>
<keyword id="KW-0929">Antimicrobial</keyword>
<keyword id="KW-0211">Defensin</keyword>
<keyword id="KW-1015">Disulfide bond</keyword>
<keyword id="KW-1185">Reference proteome</keyword>
<keyword id="KW-0964">Secreted</keyword>
<keyword id="KW-0732">Signal</keyword>
<proteinExistence type="inferred from homology"/>
<dbReference type="EMBL" id="AM410162">
    <property type="protein sequence ID" value="CAL68972.1"/>
    <property type="molecule type" value="Genomic_DNA"/>
</dbReference>
<dbReference type="RefSeq" id="XP_004061674.4">
    <property type="nucleotide sequence ID" value="XM_004061626.4"/>
</dbReference>
<dbReference type="STRING" id="9593.ENSGGOP00000015480"/>
<dbReference type="GeneID" id="101143246"/>
<dbReference type="eggNOG" id="ENOG502TDUT">
    <property type="taxonomic scope" value="Eukaryota"/>
</dbReference>
<dbReference type="HOGENOM" id="CLU_1618467_0_0_1"/>
<dbReference type="InParanoid" id="A4H257"/>
<dbReference type="Proteomes" id="UP000001519">
    <property type="component" value="Unplaced"/>
</dbReference>
<dbReference type="GO" id="GO:0005576">
    <property type="term" value="C:extracellular region"/>
    <property type="evidence" value="ECO:0007669"/>
    <property type="project" value="UniProtKB-SubCell"/>
</dbReference>
<dbReference type="GO" id="GO:0042742">
    <property type="term" value="P:defense response to bacterium"/>
    <property type="evidence" value="ECO:0007669"/>
    <property type="project" value="UniProtKB-KW"/>
</dbReference>
<comment type="function">
    <text evidence="4">Has antibacterial activity.</text>
</comment>
<comment type="subcellular location">
    <subcellularLocation>
        <location evidence="4">Secreted</location>
    </subcellularLocation>
</comment>
<comment type="similarity">
    <text evidence="4">Belongs to the beta-defensin family.</text>
</comment>
<feature type="signal peptide" evidence="2">
    <location>
        <begin position="1"/>
        <end position="19"/>
    </location>
</feature>
<feature type="chain" id="PRO_0000289854" description="Beta-defensin 129">
    <location>
        <begin position="20"/>
        <end position="183"/>
    </location>
</feature>
<feature type="region of interest" description="Disordered" evidence="3">
    <location>
        <begin position="141"/>
        <end position="183"/>
    </location>
</feature>
<feature type="compositionally biased region" description="Pro residues" evidence="3">
    <location>
        <begin position="161"/>
        <end position="170"/>
    </location>
</feature>
<feature type="disulfide bond" evidence="1">
    <location>
        <begin position="27"/>
        <end position="53"/>
    </location>
</feature>
<feature type="disulfide bond" evidence="1">
    <location>
        <begin position="34"/>
        <end position="48"/>
    </location>
</feature>
<feature type="disulfide bond" evidence="1">
    <location>
        <begin position="38"/>
        <end position="54"/>
    </location>
</feature>
<sequence>MKLLFPIFASLMLQYQVNTEFIGLRRCLMGLGRCRDHCNVDEKEIQKCKMKKCCVGPKVVKLIKNYLQYGTPNVLNEDVQEMLKPAKNSSAVIQRKHILSVLPQIKSTSFFANTNFVIIPNATPMNSATISTMTPGQITYTATSTKSNTKESRDSATASSPPAPPPPNILPTPSLELEEAEEQ</sequence>
<organism>
    <name type="scientific">Gorilla gorilla gorilla</name>
    <name type="common">Western lowland gorilla</name>
    <dbReference type="NCBI Taxonomy" id="9595"/>
    <lineage>
        <taxon>Eukaryota</taxon>
        <taxon>Metazoa</taxon>
        <taxon>Chordata</taxon>
        <taxon>Craniata</taxon>
        <taxon>Vertebrata</taxon>
        <taxon>Euteleostomi</taxon>
        <taxon>Mammalia</taxon>
        <taxon>Eutheria</taxon>
        <taxon>Euarchontoglires</taxon>
        <taxon>Primates</taxon>
        <taxon>Haplorrhini</taxon>
        <taxon>Catarrhini</taxon>
        <taxon>Hominidae</taxon>
        <taxon>Gorilla</taxon>
    </lineage>
</organism>
<reference key="1">
    <citation type="submission" date="2006-11" db="EMBL/GenBank/DDBJ databases">
        <title>Evolution and sequence variation of human beta-defensin genes.</title>
        <authorList>
            <person name="Hollox E.J."/>
            <person name="Armour J.A.L."/>
        </authorList>
    </citation>
    <scope>NUCLEOTIDE SEQUENCE [GENOMIC DNA]</scope>
</reference>
<accession>A4H257</accession>
<name>DB129_GORGO</name>